<sequence length="349" mass="37914">MSDRKAALDMALRQIEKQFGKGSIMKLGEQAEQRVSTISSGALALDIALGVGGYPRGRVIEVYGPESSGKTTVALHAIAEVQRNGGQAAFIDAEHALDPVYAKKLGVNIDELLLSQPDTGEQALEIAEALVRSGAIDVIVIDSVAALVPKAEIEGEMGDSHVGLQARLMSQALRKLSGAINKSKTIAIFINQIREKVGVMFGNPETTPGGRALKFYSSVRLEVRRAETLKQGNDMVGNKTKIKVVKNKVAPPFKQAEVDIMYGEGISREGSILDIASELDIVQKSGAWYSFNDERLGQGRENAKQFLKENPEAAEEIESRIREHYGLNGEIEVEAPSEEEFEDLPLDLK</sequence>
<dbReference type="EMBL" id="BA000004">
    <property type="protein sequence ID" value="BAB06102.1"/>
    <property type="molecule type" value="Genomic_DNA"/>
</dbReference>
<dbReference type="PIR" id="G83947">
    <property type="entry name" value="G83947"/>
</dbReference>
<dbReference type="RefSeq" id="WP_010898536.1">
    <property type="nucleotide sequence ID" value="NC_002570.2"/>
</dbReference>
<dbReference type="SMR" id="Q9KAA7"/>
<dbReference type="STRING" id="272558.gene:10728281"/>
<dbReference type="GeneID" id="87597903"/>
<dbReference type="KEGG" id="bha:BH2383"/>
<dbReference type="eggNOG" id="COG0468">
    <property type="taxonomic scope" value="Bacteria"/>
</dbReference>
<dbReference type="HOGENOM" id="CLU_040469_1_2_9"/>
<dbReference type="OrthoDB" id="9776733at2"/>
<dbReference type="Proteomes" id="UP000001258">
    <property type="component" value="Chromosome"/>
</dbReference>
<dbReference type="GO" id="GO:0005829">
    <property type="term" value="C:cytosol"/>
    <property type="evidence" value="ECO:0007669"/>
    <property type="project" value="TreeGrafter"/>
</dbReference>
<dbReference type="GO" id="GO:0005524">
    <property type="term" value="F:ATP binding"/>
    <property type="evidence" value="ECO:0007669"/>
    <property type="project" value="UniProtKB-UniRule"/>
</dbReference>
<dbReference type="GO" id="GO:0016887">
    <property type="term" value="F:ATP hydrolysis activity"/>
    <property type="evidence" value="ECO:0007669"/>
    <property type="project" value="InterPro"/>
</dbReference>
<dbReference type="GO" id="GO:0140664">
    <property type="term" value="F:ATP-dependent DNA damage sensor activity"/>
    <property type="evidence" value="ECO:0007669"/>
    <property type="project" value="InterPro"/>
</dbReference>
<dbReference type="GO" id="GO:0003684">
    <property type="term" value="F:damaged DNA binding"/>
    <property type="evidence" value="ECO:0007669"/>
    <property type="project" value="UniProtKB-UniRule"/>
</dbReference>
<dbReference type="GO" id="GO:0003697">
    <property type="term" value="F:single-stranded DNA binding"/>
    <property type="evidence" value="ECO:0007669"/>
    <property type="project" value="UniProtKB-UniRule"/>
</dbReference>
<dbReference type="GO" id="GO:0006310">
    <property type="term" value="P:DNA recombination"/>
    <property type="evidence" value="ECO:0007669"/>
    <property type="project" value="UniProtKB-UniRule"/>
</dbReference>
<dbReference type="GO" id="GO:0006281">
    <property type="term" value="P:DNA repair"/>
    <property type="evidence" value="ECO:0007669"/>
    <property type="project" value="UniProtKB-UniRule"/>
</dbReference>
<dbReference type="GO" id="GO:0009432">
    <property type="term" value="P:SOS response"/>
    <property type="evidence" value="ECO:0007669"/>
    <property type="project" value="UniProtKB-UniRule"/>
</dbReference>
<dbReference type="CDD" id="cd00983">
    <property type="entry name" value="RecA"/>
    <property type="match status" value="1"/>
</dbReference>
<dbReference type="FunFam" id="3.40.50.300:FF:000087">
    <property type="entry name" value="Recombinase RecA"/>
    <property type="match status" value="1"/>
</dbReference>
<dbReference type="Gene3D" id="3.40.50.300">
    <property type="entry name" value="P-loop containing nucleotide triphosphate hydrolases"/>
    <property type="match status" value="1"/>
</dbReference>
<dbReference type="HAMAP" id="MF_00268">
    <property type="entry name" value="RecA"/>
    <property type="match status" value="1"/>
</dbReference>
<dbReference type="InterPro" id="IPR003593">
    <property type="entry name" value="AAA+_ATPase"/>
</dbReference>
<dbReference type="InterPro" id="IPR013765">
    <property type="entry name" value="DNA_recomb/repair_RecA"/>
</dbReference>
<dbReference type="InterPro" id="IPR020584">
    <property type="entry name" value="DNA_recomb/repair_RecA_CS"/>
</dbReference>
<dbReference type="InterPro" id="IPR027417">
    <property type="entry name" value="P-loop_NTPase"/>
</dbReference>
<dbReference type="InterPro" id="IPR049261">
    <property type="entry name" value="RecA-like_C"/>
</dbReference>
<dbReference type="InterPro" id="IPR049428">
    <property type="entry name" value="RecA-like_N"/>
</dbReference>
<dbReference type="InterPro" id="IPR020588">
    <property type="entry name" value="RecA_ATP-bd"/>
</dbReference>
<dbReference type="InterPro" id="IPR023400">
    <property type="entry name" value="RecA_C_sf"/>
</dbReference>
<dbReference type="InterPro" id="IPR020587">
    <property type="entry name" value="RecA_monomer-monomer_interface"/>
</dbReference>
<dbReference type="NCBIfam" id="TIGR02012">
    <property type="entry name" value="tigrfam_recA"/>
    <property type="match status" value="1"/>
</dbReference>
<dbReference type="PANTHER" id="PTHR45900:SF1">
    <property type="entry name" value="MITOCHONDRIAL DNA REPAIR PROTEIN RECA HOMOLOG-RELATED"/>
    <property type="match status" value="1"/>
</dbReference>
<dbReference type="PANTHER" id="PTHR45900">
    <property type="entry name" value="RECA"/>
    <property type="match status" value="1"/>
</dbReference>
<dbReference type="Pfam" id="PF00154">
    <property type="entry name" value="RecA"/>
    <property type="match status" value="1"/>
</dbReference>
<dbReference type="Pfam" id="PF21096">
    <property type="entry name" value="RecA_C"/>
    <property type="match status" value="1"/>
</dbReference>
<dbReference type="PRINTS" id="PR00142">
    <property type="entry name" value="RECA"/>
</dbReference>
<dbReference type="SMART" id="SM00382">
    <property type="entry name" value="AAA"/>
    <property type="match status" value="1"/>
</dbReference>
<dbReference type="SUPFAM" id="SSF52540">
    <property type="entry name" value="P-loop containing nucleoside triphosphate hydrolases"/>
    <property type="match status" value="1"/>
</dbReference>
<dbReference type="SUPFAM" id="SSF54752">
    <property type="entry name" value="RecA protein, C-terminal domain"/>
    <property type="match status" value="1"/>
</dbReference>
<dbReference type="PROSITE" id="PS00321">
    <property type="entry name" value="RECA_1"/>
    <property type="match status" value="1"/>
</dbReference>
<dbReference type="PROSITE" id="PS50162">
    <property type="entry name" value="RECA_2"/>
    <property type="match status" value="1"/>
</dbReference>
<dbReference type="PROSITE" id="PS50163">
    <property type="entry name" value="RECA_3"/>
    <property type="match status" value="1"/>
</dbReference>
<reference key="1">
    <citation type="journal article" date="2000" name="Nucleic Acids Res.">
        <title>Complete genome sequence of the alkaliphilic bacterium Bacillus halodurans and genomic sequence comparison with Bacillus subtilis.</title>
        <authorList>
            <person name="Takami H."/>
            <person name="Nakasone K."/>
            <person name="Takaki Y."/>
            <person name="Maeno G."/>
            <person name="Sasaki R."/>
            <person name="Masui N."/>
            <person name="Fuji F."/>
            <person name="Hirama C."/>
            <person name="Nakamura Y."/>
            <person name="Ogasawara N."/>
            <person name="Kuhara S."/>
            <person name="Horikoshi K."/>
        </authorList>
    </citation>
    <scope>NUCLEOTIDE SEQUENCE [LARGE SCALE GENOMIC DNA]</scope>
    <source>
        <strain>ATCC BAA-125 / DSM 18197 / FERM 7344 / JCM 9153 / C-125</strain>
    </source>
</reference>
<name>RECA_HALH5</name>
<accession>Q9KAA7</accession>
<keyword id="KW-0067">ATP-binding</keyword>
<keyword id="KW-0963">Cytoplasm</keyword>
<keyword id="KW-0227">DNA damage</keyword>
<keyword id="KW-0233">DNA recombination</keyword>
<keyword id="KW-0234">DNA repair</keyword>
<keyword id="KW-0238">DNA-binding</keyword>
<keyword id="KW-0547">Nucleotide-binding</keyword>
<keyword id="KW-1185">Reference proteome</keyword>
<keyword id="KW-0742">SOS response</keyword>
<organism>
    <name type="scientific">Halalkalibacterium halodurans (strain ATCC BAA-125 / DSM 18197 / FERM 7344 / JCM 9153 / C-125)</name>
    <name type="common">Bacillus halodurans</name>
    <dbReference type="NCBI Taxonomy" id="272558"/>
    <lineage>
        <taxon>Bacteria</taxon>
        <taxon>Bacillati</taxon>
        <taxon>Bacillota</taxon>
        <taxon>Bacilli</taxon>
        <taxon>Bacillales</taxon>
        <taxon>Bacillaceae</taxon>
        <taxon>Halalkalibacterium (ex Joshi et al. 2022)</taxon>
    </lineage>
</organism>
<proteinExistence type="inferred from homology"/>
<protein>
    <recommendedName>
        <fullName evidence="1">Protein RecA</fullName>
    </recommendedName>
    <alternativeName>
        <fullName evidence="1">Recombinase A</fullName>
    </alternativeName>
</protein>
<evidence type="ECO:0000255" key="1">
    <source>
        <dbReference type="HAMAP-Rule" id="MF_00268"/>
    </source>
</evidence>
<evidence type="ECO:0000256" key="2">
    <source>
        <dbReference type="SAM" id="MobiDB-lite"/>
    </source>
</evidence>
<comment type="function">
    <text evidence="1">Can catalyze the hydrolysis of ATP in the presence of single-stranded DNA, the ATP-dependent uptake of single-stranded DNA by duplex DNA, and the ATP-dependent hybridization of homologous single-stranded DNAs. It interacts with LexA causing its activation and leading to its autocatalytic cleavage.</text>
</comment>
<comment type="subcellular location">
    <subcellularLocation>
        <location evidence="1">Cytoplasm</location>
    </subcellularLocation>
</comment>
<comment type="similarity">
    <text evidence="1">Belongs to the RecA family.</text>
</comment>
<gene>
    <name evidence="1" type="primary">recA</name>
    <name type="ordered locus">BH2383</name>
</gene>
<feature type="chain" id="PRO_0000122652" description="Protein RecA">
    <location>
        <begin position="1"/>
        <end position="349"/>
    </location>
</feature>
<feature type="region of interest" description="Disordered" evidence="2">
    <location>
        <begin position="328"/>
        <end position="349"/>
    </location>
</feature>
<feature type="compositionally biased region" description="Acidic residues" evidence="2">
    <location>
        <begin position="331"/>
        <end position="349"/>
    </location>
</feature>
<feature type="binding site" evidence="1">
    <location>
        <begin position="64"/>
        <end position="71"/>
    </location>
    <ligand>
        <name>ATP</name>
        <dbReference type="ChEBI" id="CHEBI:30616"/>
    </ligand>
</feature>